<dbReference type="EMBL" id="CP000780">
    <property type="protein sequence ID" value="ABS55069.1"/>
    <property type="molecule type" value="Genomic_DNA"/>
</dbReference>
<dbReference type="RefSeq" id="WP_012106090.1">
    <property type="nucleotide sequence ID" value="NC_009712.1"/>
</dbReference>
<dbReference type="SMR" id="A7I5Q8"/>
<dbReference type="STRING" id="456442.Mboo_0551"/>
<dbReference type="GeneID" id="5411173"/>
<dbReference type="KEGG" id="mbn:Mboo_0551"/>
<dbReference type="eggNOG" id="arCOG04088">
    <property type="taxonomic scope" value="Archaea"/>
</dbReference>
<dbReference type="HOGENOM" id="CLU_056222_2_0_2"/>
<dbReference type="OrthoDB" id="8644at2157"/>
<dbReference type="Proteomes" id="UP000002408">
    <property type="component" value="Chromosome"/>
</dbReference>
<dbReference type="GO" id="GO:0022625">
    <property type="term" value="C:cytosolic large ribosomal subunit"/>
    <property type="evidence" value="ECO:0007669"/>
    <property type="project" value="TreeGrafter"/>
</dbReference>
<dbReference type="GO" id="GO:0008097">
    <property type="term" value="F:5S rRNA binding"/>
    <property type="evidence" value="ECO:0007669"/>
    <property type="project" value="InterPro"/>
</dbReference>
<dbReference type="GO" id="GO:0003735">
    <property type="term" value="F:structural constituent of ribosome"/>
    <property type="evidence" value="ECO:0007669"/>
    <property type="project" value="InterPro"/>
</dbReference>
<dbReference type="GO" id="GO:0000027">
    <property type="term" value="P:ribosomal large subunit assembly"/>
    <property type="evidence" value="ECO:0007669"/>
    <property type="project" value="TreeGrafter"/>
</dbReference>
<dbReference type="GO" id="GO:0006412">
    <property type="term" value="P:translation"/>
    <property type="evidence" value="ECO:0007669"/>
    <property type="project" value="UniProtKB-UniRule"/>
</dbReference>
<dbReference type="CDD" id="cd00432">
    <property type="entry name" value="Ribosomal_L18_L5e"/>
    <property type="match status" value="1"/>
</dbReference>
<dbReference type="Gene3D" id="3.30.420.100">
    <property type="match status" value="1"/>
</dbReference>
<dbReference type="HAMAP" id="MF_01337_A">
    <property type="entry name" value="Ribosomal_uL18_A"/>
    <property type="match status" value="1"/>
</dbReference>
<dbReference type="InterPro" id="IPR005485">
    <property type="entry name" value="Rbsml_uL18_euk"/>
</dbReference>
<dbReference type="NCBIfam" id="NF006342">
    <property type="entry name" value="PRK08569.1"/>
    <property type="match status" value="1"/>
</dbReference>
<dbReference type="PANTHER" id="PTHR23410:SF12">
    <property type="entry name" value="LARGE RIBOSOMAL SUBUNIT PROTEIN UL18"/>
    <property type="match status" value="1"/>
</dbReference>
<dbReference type="PANTHER" id="PTHR23410">
    <property type="entry name" value="RIBOSOMAL PROTEIN L5-RELATED"/>
    <property type="match status" value="1"/>
</dbReference>
<dbReference type="Pfam" id="PF17144">
    <property type="entry name" value="Ribosomal_L5e"/>
    <property type="match status" value="2"/>
</dbReference>
<dbReference type="SUPFAM" id="SSF53137">
    <property type="entry name" value="Translational machinery components"/>
    <property type="match status" value="1"/>
</dbReference>
<keyword id="KW-1185">Reference proteome</keyword>
<keyword id="KW-0687">Ribonucleoprotein</keyword>
<keyword id="KW-0689">Ribosomal protein</keyword>
<keyword id="KW-0694">RNA-binding</keyword>
<keyword id="KW-0699">rRNA-binding</keyword>
<comment type="function">
    <text evidence="1">This is one of the proteins that bind and probably mediate the attachment of the 5S RNA into the large ribosomal subunit, where it forms part of the central protuberance.</text>
</comment>
<comment type="subunit">
    <text evidence="1">Part of the 50S ribosomal subunit. Contacts the 5S and 23S rRNAs.</text>
</comment>
<comment type="similarity">
    <text evidence="1">Belongs to the universal ribosomal protein uL18 family.</text>
</comment>
<organism>
    <name type="scientific">Methanoregula boonei (strain DSM 21154 / JCM 14090 / 6A8)</name>
    <dbReference type="NCBI Taxonomy" id="456442"/>
    <lineage>
        <taxon>Archaea</taxon>
        <taxon>Methanobacteriati</taxon>
        <taxon>Methanobacteriota</taxon>
        <taxon>Stenosarchaea group</taxon>
        <taxon>Methanomicrobia</taxon>
        <taxon>Methanomicrobiales</taxon>
        <taxon>Methanoregulaceae</taxon>
        <taxon>Methanoregula</taxon>
    </lineage>
</organism>
<protein>
    <recommendedName>
        <fullName evidence="1">Large ribosomal subunit protein uL18</fullName>
    </recommendedName>
    <alternativeName>
        <fullName evidence="2">50S ribosomal protein L18</fullName>
    </alternativeName>
</protein>
<evidence type="ECO:0000255" key="1">
    <source>
        <dbReference type="HAMAP-Rule" id="MF_01337"/>
    </source>
</evidence>
<evidence type="ECO:0000305" key="2"/>
<sequence length="174" mass="18834">MATGPRYLVAFRRRREGRTDYYQRTKLVVADAPRMVVRRTNRHIIVQLVTAEMEGDKTLVSANSAELEKYGYTGATANTPAAYLTGLLFAAKAKKAGQDSAILDIGLNRATPGARVFAALKGAVDGGLEIPYGESILPSEDRLKGEHIAAYNEKAGDIVKNVEQVAAAIKKELV</sequence>
<accession>A7I5Q8</accession>
<feature type="chain" id="PRO_1000053054" description="Large ribosomal subunit protein uL18">
    <location>
        <begin position="1"/>
        <end position="174"/>
    </location>
</feature>
<proteinExistence type="inferred from homology"/>
<reference key="1">
    <citation type="journal article" date="2015" name="Microbiology">
        <title>Genome of Methanoregula boonei 6A8 reveals adaptations to oligotrophic peatland environments.</title>
        <authorList>
            <person name="Braeuer S."/>
            <person name="Cadillo-Quiroz H."/>
            <person name="Kyrpides N."/>
            <person name="Woyke T."/>
            <person name="Goodwin L."/>
            <person name="Detter C."/>
            <person name="Podell S."/>
            <person name="Yavitt J.B."/>
            <person name="Zinder S.H."/>
        </authorList>
    </citation>
    <scope>NUCLEOTIDE SEQUENCE [LARGE SCALE GENOMIC DNA]</scope>
    <source>
        <strain>DSM 21154 / JCM 14090 / 6A8</strain>
    </source>
</reference>
<gene>
    <name evidence="1" type="primary">rpl18</name>
    <name type="ordered locus">Mboo_0551</name>
</gene>
<name>RL18_METB6</name>